<comment type="function">
    <text evidence="1">Component of the type III secretion system (T3SS), also called injectisome, which is used to inject bacterial effector proteins into eukaryotic host cells (By similarity). Acts as a regulator of the HrcN/SctN ATPase activity (By similarity).</text>
</comment>
<comment type="subunit">
    <text evidence="1">The core secretion machinery of the T3SS is composed of approximately 20 different proteins, including cytoplasmic components, a base, an export apparatus and a needle (By similarity). This subunit is part of the cytosolic complex (By similarity).</text>
</comment>
<comment type="subcellular location">
    <subcellularLocation>
        <location evidence="1">Cytoplasm</location>
    </subcellularLocation>
</comment>
<comment type="similarity">
    <text evidence="2">Belongs to the SctL stator family.</text>
</comment>
<dbReference type="EMBL" id="L12251">
    <property type="protein sequence ID" value="AAB17680.1"/>
    <property type="molecule type" value="Genomic_DNA"/>
</dbReference>
<dbReference type="PIR" id="S35025">
    <property type="entry name" value="S35025"/>
</dbReference>
<dbReference type="SMR" id="P33211"/>
<dbReference type="GO" id="GO:0005829">
    <property type="term" value="C:cytosol"/>
    <property type="evidence" value="ECO:0007669"/>
    <property type="project" value="TreeGrafter"/>
</dbReference>
<dbReference type="GO" id="GO:0030254">
    <property type="term" value="P:protein secretion by the type III secretion system"/>
    <property type="evidence" value="ECO:0007669"/>
    <property type="project" value="InterPro"/>
</dbReference>
<dbReference type="InterPro" id="IPR012842">
    <property type="entry name" value="T3SS_SctL/SctL2"/>
</dbReference>
<dbReference type="InterPro" id="IPR051472">
    <property type="entry name" value="T3SS_Stator/FliH"/>
</dbReference>
<dbReference type="InterPro" id="IPR010586">
    <property type="entry name" value="T3SS_stator_protein"/>
</dbReference>
<dbReference type="NCBIfam" id="TIGR02499">
    <property type="entry name" value="HrpE_YscL_not"/>
    <property type="match status" value="1"/>
</dbReference>
<dbReference type="PANTHER" id="PTHR34982:SF1">
    <property type="entry name" value="FLAGELLAR ASSEMBLY PROTEIN FLIH"/>
    <property type="match status" value="1"/>
</dbReference>
<dbReference type="PANTHER" id="PTHR34982">
    <property type="entry name" value="YOP PROTEINS TRANSLOCATION PROTEIN L"/>
    <property type="match status" value="1"/>
</dbReference>
<dbReference type="Pfam" id="PF06635">
    <property type="entry name" value="T3SS_SCTL"/>
    <property type="match status" value="1"/>
</dbReference>
<keyword id="KW-0963">Cytoplasm</keyword>
<keyword id="KW-0536">Nodulation</keyword>
<keyword id="KW-0614">Plasmid</keyword>
<keyword id="KW-0653">Protein transport</keyword>
<keyword id="KW-0813">Transport</keyword>
<proteinExistence type="inferred from homology"/>
<sequence>MSGLIARAVTEVAQRKAVLEKELPQLVIEILSDLLGAFNPGELLVRAVRHAIERRYNGAEEVCLHVCATQVDMLAREFAGCDGREKRPKVRIETDPTLSPQECVLWSEYGNVALGLDAQMRAALGFEYLSEEGEL</sequence>
<evidence type="ECO:0000250" key="1">
    <source>
        <dbReference type="UniProtKB" id="Q01253"/>
    </source>
</evidence>
<evidence type="ECO:0000305" key="2"/>
<accession>P33211</accession>
<organism>
    <name type="scientific">Rhizobium fredii</name>
    <name type="common">Sinorhizobium fredii</name>
    <dbReference type="NCBI Taxonomy" id="380"/>
    <lineage>
        <taxon>Bacteria</taxon>
        <taxon>Pseudomonadati</taxon>
        <taxon>Pseudomonadota</taxon>
        <taxon>Alphaproteobacteria</taxon>
        <taxon>Hyphomicrobiales</taxon>
        <taxon>Rhizobiaceae</taxon>
        <taxon>Sinorhizobium/Ensifer group</taxon>
        <taxon>Sinorhizobium</taxon>
    </lineage>
</organism>
<name>SCTL_RHIFR</name>
<protein>
    <recommendedName>
        <fullName evidence="1">Type 3 secretion system stator protein</fullName>
        <shortName evidence="1">T3SS stator protein</shortName>
    </recommendedName>
</protein>
<geneLocation type="plasmid">
    <name>sym</name>
</geneLocation>
<feature type="chain" id="PRO_0000096949" description="Type 3 secretion system stator protein">
    <location>
        <begin position="1"/>
        <end position="135"/>
    </location>
</feature>
<reference key="1">
    <citation type="journal article" date="1993" name="Mol. Microbiol.">
        <title>Molecular cloning and characterization of a sym plasmid locus that regulates cultivar-specific nodulation of soybean by Rhizobium fredii USDA257.</title>
        <authorList>
            <person name="Meinhardt L.W."/>
            <person name="Krishnan H.B."/>
            <person name="Balatti P.A."/>
            <person name="Pueppke S.G."/>
        </authorList>
    </citation>
    <scope>NUCLEOTIDE SEQUENCE [GENOMIC DNA]</scope>
    <source>
        <strain>USDA 257</strain>
    </source>
</reference>
<gene>
    <name evidence="1" type="primary">sctL</name>
    <name type="synonym">nolV</name>
</gene>